<proteinExistence type="evidence at protein level"/>
<reference key="1">
    <citation type="journal article" date="1987" name="Gene">
        <title>Characterization of a human multilineage-colony-stimulating factor cDNA clone identified by a conserved noncoding sequence in mouse interleukin-3.</title>
        <authorList>
            <person name="Dorssers L."/>
            <person name="Burger H."/>
            <person name="Bot F."/>
            <person name="Delwel R."/>
            <person name="Geurts van Kessel A.H.M."/>
            <person name="Loewenberg B."/>
            <person name="Wagemaker G."/>
        </authorList>
    </citation>
    <scope>NUCLEOTIDE SEQUENCE [MRNA]</scope>
</reference>
<reference key="2">
    <citation type="journal article" date="1988" name="J. Immunol.">
        <title>Isolation and characterization of an expressible cDNA encoding human IL-3. Induction of IL-3 mRNA in human T cell clones.</title>
        <authorList>
            <person name="Otsuka T."/>
            <person name="Miyajima A."/>
            <person name="Brown N."/>
            <person name="Otsu K."/>
            <person name="Abrams J."/>
            <person name="Saeland S."/>
            <person name="Caux C."/>
            <person name="de Waal Malefijt R."/>
            <person name="de Vries J."/>
            <person name="Meyerson P."/>
            <person name="Yokota K."/>
            <person name="Gemmel L."/>
            <person name="Rennick D."/>
            <person name="Lee F."/>
            <person name="Arai N."/>
            <person name="Arai K."/>
            <person name="Yokota T."/>
        </authorList>
    </citation>
    <scope>NUCLEOTIDE SEQUENCE [MRNA]</scope>
</reference>
<reference key="3">
    <citation type="journal article" date="1986" name="Cell">
        <title>Human IL-3 (multi-CSF): identification by expression cloning of a novel hematopoietic growth factor related to murine IL-3.</title>
        <authorList>
            <person name="Yang Y.-C."/>
            <person name="Ciarletta A.B."/>
            <person name="Temple P.A."/>
            <person name="Chung M.P."/>
            <person name="Kovacic S."/>
            <person name="Witek-Giannotti J.S."/>
            <person name="Leary A.C."/>
            <person name="Kriz R."/>
            <person name="Donahue R.E."/>
            <person name="Wong G.G."/>
            <person name="Clark S.C."/>
        </authorList>
    </citation>
    <scope>NUCLEOTIDE SEQUENCE [MRNA]</scope>
</reference>
<reference key="4">
    <citation type="submission" date="2001-06" db="EMBL/GenBank/DDBJ databases">
        <authorList>
            <consortium name="SeattleSNPs variation discovery resource"/>
        </authorList>
    </citation>
    <scope>NUCLEOTIDE SEQUENCE [GENOMIC DNA]</scope>
    <scope>VARIANTS HIS-15 AND SER-27</scope>
</reference>
<reference key="5">
    <citation type="journal article" date="2004" name="Nature">
        <title>The DNA sequence and comparative analysis of human chromosome 5.</title>
        <authorList>
            <person name="Schmutz J."/>
            <person name="Martin J."/>
            <person name="Terry A."/>
            <person name="Couronne O."/>
            <person name="Grimwood J."/>
            <person name="Lowry S."/>
            <person name="Gordon L.A."/>
            <person name="Scott D."/>
            <person name="Xie G."/>
            <person name="Huang W."/>
            <person name="Hellsten U."/>
            <person name="Tran-Gyamfi M."/>
            <person name="She X."/>
            <person name="Prabhakar S."/>
            <person name="Aerts A."/>
            <person name="Altherr M."/>
            <person name="Bajorek E."/>
            <person name="Black S."/>
            <person name="Branscomb E."/>
            <person name="Caoile C."/>
            <person name="Challacombe J.F."/>
            <person name="Chan Y.M."/>
            <person name="Denys M."/>
            <person name="Detter J.C."/>
            <person name="Escobar J."/>
            <person name="Flowers D."/>
            <person name="Fotopulos D."/>
            <person name="Glavina T."/>
            <person name="Gomez M."/>
            <person name="Gonzales E."/>
            <person name="Goodstein D."/>
            <person name="Grigoriev I."/>
            <person name="Groza M."/>
            <person name="Hammon N."/>
            <person name="Hawkins T."/>
            <person name="Haydu L."/>
            <person name="Israni S."/>
            <person name="Jett J."/>
            <person name="Kadner K."/>
            <person name="Kimball H."/>
            <person name="Kobayashi A."/>
            <person name="Lopez F."/>
            <person name="Lou Y."/>
            <person name="Martinez D."/>
            <person name="Medina C."/>
            <person name="Morgan J."/>
            <person name="Nandkeshwar R."/>
            <person name="Noonan J.P."/>
            <person name="Pitluck S."/>
            <person name="Pollard M."/>
            <person name="Predki P."/>
            <person name="Priest J."/>
            <person name="Ramirez L."/>
            <person name="Retterer J."/>
            <person name="Rodriguez A."/>
            <person name="Rogers S."/>
            <person name="Salamov A."/>
            <person name="Salazar A."/>
            <person name="Thayer N."/>
            <person name="Tice H."/>
            <person name="Tsai M."/>
            <person name="Ustaszewska A."/>
            <person name="Vo N."/>
            <person name="Wheeler J."/>
            <person name="Wu K."/>
            <person name="Yang J."/>
            <person name="Dickson M."/>
            <person name="Cheng J.-F."/>
            <person name="Eichler E.E."/>
            <person name="Olsen A."/>
            <person name="Pennacchio L.A."/>
            <person name="Rokhsar D.S."/>
            <person name="Richardson P."/>
            <person name="Lucas S.M."/>
            <person name="Myers R.M."/>
            <person name="Rubin E.M."/>
        </authorList>
    </citation>
    <scope>NUCLEOTIDE SEQUENCE [LARGE SCALE GENOMIC DNA]</scope>
</reference>
<reference key="6">
    <citation type="journal article" date="2004" name="Genome Res.">
        <title>The status, quality, and expansion of the NIH full-length cDNA project: the Mammalian Gene Collection (MGC).</title>
        <authorList>
            <consortium name="The MGC Project Team"/>
        </authorList>
    </citation>
    <scope>NUCLEOTIDE SEQUENCE [LARGE SCALE MRNA]</scope>
    <scope>VARIANT SER-27</scope>
</reference>
<reference key="7">
    <citation type="journal article" date="1989" name="Ann. N. Y. Acad. Sci.">
        <title>Molecular characterization of colony-stimulating factors and their receptors: human interleukin-3.</title>
        <authorList>
            <person name="Urdal D.L."/>
            <person name="Price V."/>
            <person name="Sassenfeld H.M."/>
            <person name="Cosman D."/>
            <person name="Gillis S."/>
            <person name="Park L.S."/>
        </authorList>
    </citation>
    <scope>NUCLEOTIDE SEQUENCE OF 20-152</scope>
    <scope>VARIANT SER-27</scope>
</reference>
<reference key="8">
    <citation type="journal article" date="1989" name="J. Clin. Invest.">
        <title>Regulation of interleukin 3 gene induction in normal human T cells.</title>
        <authorList>
            <person name="Guba S.C."/>
            <person name="Stella G."/>
            <person name="Turka L.A."/>
            <person name="June C.H."/>
            <person name="Thompson C.B."/>
            <person name="Emerson S.G."/>
        </authorList>
    </citation>
    <scope>FUNCTION</scope>
    <scope>INDUCTION BY T-CELL RECEPTOR/CD3 PATHWAY</scope>
</reference>
<reference key="9">
    <citation type="journal article" date="1993" name="Clin. Exp. Allergy">
        <title>Comparison of mechanisms of IL-3 induced histamine release and IL-3 priming effect on human basophils.</title>
        <authorList>
            <person name="Okayama Y."/>
            <person name="Begishvili T.B."/>
            <person name="Church M.K."/>
        </authorList>
    </citation>
    <scope>FUNCTION</scope>
</reference>
<reference key="10">
    <citation type="journal article" date="2003" name="J. Immunol.">
        <title>IL-3 acts directly on osteoclast precursors and irreversibly inhibits receptor activator of NF-kappa B ligand-induced osteoclast differentiation by diverting the cells to macrophage lineage.</title>
        <authorList>
            <person name="Khapli S.M."/>
            <person name="Mangashetti L.S."/>
            <person name="Yogesha S.D."/>
            <person name="Wani M.R."/>
        </authorList>
    </citation>
    <scope>FUNCTION</scope>
</reference>
<reference key="11">
    <citation type="journal article" date="2012" name="PLoS ONE">
        <title>The interleukin 3 gene (IL3) contributes to human brain volume variation by regulating proliferation and survival of neural progenitors.</title>
        <authorList>
            <consortium name="Alzheimer's Disease Neuroimaging Initiative"/>
            <person name="Luo X.J."/>
            <person name="Li M."/>
            <person name="Huang L."/>
            <person name="Nho K."/>
            <person name="Deng M."/>
            <person name="Chen Q."/>
            <person name="Weinberger D.R."/>
            <person name="Vasquez A.A."/>
            <person name="Rijpkema M."/>
            <person name="Mattay V.S."/>
            <person name="Saykin A.J."/>
            <person name="Shen L."/>
            <person name="Fernandez G."/>
            <person name="Franke B."/>
            <person name="Chen J.C."/>
            <person name="Chen X.N."/>
            <person name="Wang J.K."/>
            <person name="Xiao X."/>
            <person name="Qi X.B."/>
            <person name="Xiang K."/>
            <person name="Peng Y.M."/>
            <person name="Cao X.Y."/>
            <person name="Li Y."/>
            <person name="Shi X.D."/>
            <person name="Gan L."/>
            <person name="Su B."/>
        </authorList>
    </citation>
    <scope>FUNCTION</scope>
</reference>
<reference key="12">
    <citation type="journal article" date="2017" name="J. Cell. Biochem.">
        <title>Interleukin-3 Prevents Cellular Death Induced by Oxidative Stress in HEK293 Cells.</title>
        <authorList>
            <person name="Lopez C."/>
            <person name="Zamorano P."/>
            <person name="Teuber S."/>
            <person name="Salas M."/>
            <person name="Otth C."/>
            <person name="Hidalgo M.A."/>
            <person name="Concha I."/>
            <person name="Zambrano A."/>
        </authorList>
    </citation>
    <scope>FUNCTION</scope>
</reference>
<reference key="13">
    <citation type="journal article" date="2020" name="Cytokine">
        <title>Interleukin 3-induced GITR promotes the activation of human basophils.</title>
        <authorList>
            <person name="Hong L."/>
            <person name="Tang Y."/>
            <person name="Pan S."/>
            <person name="Xu M."/>
            <person name="Shi Y."/>
            <person name="Gao S."/>
            <person name="Sui C."/>
            <person name="He C."/>
            <person name="Zheng K."/>
            <person name="Tang R."/>
            <person name="Shi Z."/>
            <person name="Wang Q."/>
            <person name="Wang H."/>
        </authorList>
    </citation>
    <scope>FUNCTION IN ACTIVATION OF BASOPHILS</scope>
</reference>
<reference key="14">
    <citation type="journal article" date="1996" name="J. Mol. Biol.">
        <title>Three-dimensional solution structure and backbone dynamics of a variant of human interleukin-3.</title>
        <authorList>
            <person name="Feng Y."/>
            <person name="Klein B.K."/>
            <person name="McWherter C.A."/>
        </authorList>
    </citation>
    <scope>STRUCTURE BY NMR</scope>
</reference>
<reference evidence="15 16" key="15">
    <citation type="journal article" date="2018" name="Nat. Commun.">
        <title>A dual role for the N-terminal domain of the IL-3 receptor in cell signalling.</title>
        <authorList>
            <person name="Broughton S.E."/>
            <person name="Hercus T.R."/>
            <person name="Nero T.L."/>
            <person name="Kan W.L."/>
            <person name="Barry E.F."/>
            <person name="Dottore M."/>
            <person name="Cheung Tung Shing K.S."/>
            <person name="Morton C.J."/>
            <person name="Dhagat U."/>
            <person name="Hardy M.P."/>
            <person name="Wilson N.J."/>
            <person name="Downton M.T."/>
            <person name="Schieber C."/>
            <person name="Hughes T.P."/>
            <person name="Lopez A.F."/>
            <person name="Parker M.W."/>
        </authorList>
    </citation>
    <scope>X-RAY CRYSTALLOGRAPHY (2.40 ANGSTROMS) OF 31-152</scope>
    <scope>DISULFIDE BONDS</scope>
    <scope>INTERACTION WITH IL3RA</scope>
    <scope>FUNCTION</scope>
</reference>
<accession>P08700</accession>
<accession>Q6GS87</accession>
<organism>
    <name type="scientific">Homo sapiens</name>
    <name type="common">Human</name>
    <dbReference type="NCBI Taxonomy" id="9606"/>
    <lineage>
        <taxon>Eukaryota</taxon>
        <taxon>Metazoa</taxon>
        <taxon>Chordata</taxon>
        <taxon>Craniata</taxon>
        <taxon>Vertebrata</taxon>
        <taxon>Euteleostomi</taxon>
        <taxon>Mammalia</taxon>
        <taxon>Eutheria</taxon>
        <taxon>Euarchontoglires</taxon>
        <taxon>Primates</taxon>
        <taxon>Haplorrhini</taxon>
        <taxon>Catarrhini</taxon>
        <taxon>Hominidae</taxon>
        <taxon>Homo</taxon>
    </lineage>
</organism>
<comment type="function">
    <text evidence="1 3 4 6 8 9 10 11">Cytokine secreted predominantly by activated T-lymphocytes as well as mast cells and osteoblastic cells that controls the production and differentiation of hematopoietic progenitor cells into lineage-restricted cells (PubMed:2556442). Also stimulates mature basophils, eosinophils, and monocytes to become functionally activated (PubMed:10779277, PubMed:32889153). In addition, plays an important role in neural cell proliferation and survival (PubMed:23226269). Participates as well in bone homeostasis and inhibits osteoclast differentiation by preventing NF-kappa-B nuclear translocation and activation (PubMed:12816992). Mechanistically, exerts its biological effects through a receptor composed of IL3RA subunit and a signal transducing subunit IL3RB (PubMed:29374162). Receptor stimulation results in the rapid activation of JAK2 kinase activity leading to STAT5-mediated transcriptional program (By similarity). Alternatively, contributes to cell survival under oxidative stress in non-hematopoietic systems by activating pathways mediated by PI3K/AKT and ERK (PubMed:27862234).</text>
</comment>
<comment type="subunit">
    <text evidence="10">Interacts with IL3RA (PubMed:29374162).</text>
</comment>
<comment type="interaction">
    <interactant intactId="EBI-1811718">
        <id>P08700</id>
    </interactant>
    <interactant intactId="EBI-1809771">
        <id>P32927</id>
        <label>CSF2RB</label>
    </interactant>
    <organismsDiffer>false</organismsDiffer>
    <experiments>2</experiments>
</comment>
<comment type="interaction">
    <interactant intactId="EBI-1811718">
        <id>P08700</id>
    </interactant>
    <interactant intactId="EBI-40263837">
        <id>P26951-1</id>
        <label>IL3RA</label>
    </interactant>
    <organismsDiffer>false</organismsDiffer>
    <experiments>5</experiments>
</comment>
<comment type="subcellular location">
    <subcellularLocation>
        <location>Secreted</location>
    </subcellularLocation>
</comment>
<comment type="tissue specificity">
    <text>Activated T-cells, mast cells, natural killer cells.</text>
</comment>
<comment type="induction">
    <text evidence="8">Upon activation of the T-cell receptor/CD3 pathway and can be augmented by coactivation of the CD3 and CD28 pathways.</text>
</comment>
<comment type="similarity">
    <text evidence="13">Belongs to the IL-3 family.</text>
</comment>
<comment type="online information" name="Atlas of Genetics and Cytogenetics in Oncology and Haematology">
    <link uri="https://atlasgeneticsoncology.org/gene/60/IL3"/>
</comment>
<gene>
    <name evidence="14" type="primary">IL3</name>
</gene>
<protein>
    <recommendedName>
        <fullName>Interleukin-3</fullName>
        <shortName>IL-3</shortName>
    </recommendedName>
    <alternativeName>
        <fullName>Hematopoietic growth factor</fullName>
    </alternativeName>
    <alternativeName>
        <fullName>Mast cell growth factor</fullName>
        <shortName>MCGF</shortName>
    </alternativeName>
    <alternativeName>
        <fullName>Multipotential colony-stimulating factor</fullName>
    </alternativeName>
    <alternativeName>
        <fullName>P-cell-stimulating factor</fullName>
    </alternativeName>
</protein>
<keyword id="KW-0002">3D-structure</keyword>
<keyword id="KW-0202">Cytokine</keyword>
<keyword id="KW-1015">Disulfide bond</keyword>
<keyword id="KW-0325">Glycoprotein</keyword>
<keyword id="KW-0339">Growth factor</keyword>
<keyword id="KW-1185">Reference proteome</keyword>
<keyword id="KW-0964">Secreted</keyword>
<keyword id="KW-0732">Signal</keyword>
<evidence type="ECO:0000250" key="1">
    <source>
        <dbReference type="UniProtKB" id="P01586"/>
    </source>
</evidence>
<evidence type="ECO:0000255" key="2"/>
<evidence type="ECO:0000269" key="3">
    <source>
    </source>
</evidence>
<evidence type="ECO:0000269" key="4">
    <source>
    </source>
</evidence>
<evidence type="ECO:0000269" key="5">
    <source>
    </source>
</evidence>
<evidence type="ECO:0000269" key="6">
    <source>
    </source>
</evidence>
<evidence type="ECO:0000269" key="7">
    <source>
    </source>
</evidence>
<evidence type="ECO:0000269" key="8">
    <source>
    </source>
</evidence>
<evidence type="ECO:0000269" key="9">
    <source>
    </source>
</evidence>
<evidence type="ECO:0000269" key="10">
    <source>
    </source>
</evidence>
<evidence type="ECO:0000269" key="11">
    <source>
    </source>
</evidence>
<evidence type="ECO:0000269" key="12">
    <source ref="4"/>
</evidence>
<evidence type="ECO:0000305" key="13"/>
<evidence type="ECO:0000312" key="14">
    <source>
        <dbReference type="HGNC" id="HGNC:6011"/>
    </source>
</evidence>
<evidence type="ECO:0007744" key="15">
    <source>
        <dbReference type="PDB" id="5UV8"/>
    </source>
</evidence>
<evidence type="ECO:0007744" key="16">
    <source>
        <dbReference type="PDB" id="5UWC"/>
    </source>
</evidence>
<evidence type="ECO:0007829" key="17">
    <source>
        <dbReference type="PDB" id="5UWC"/>
    </source>
</evidence>
<feature type="signal peptide">
    <location>
        <begin position="1"/>
        <end position="19"/>
    </location>
</feature>
<feature type="chain" id="PRO_0000015516" description="Interleukin-3">
    <location>
        <begin position="20"/>
        <end position="152"/>
    </location>
</feature>
<feature type="glycosylation site" description="N-linked (GlcNAc...) asparagine" evidence="2">
    <location>
        <position position="34"/>
    </location>
</feature>
<feature type="glycosylation site" description="N-linked (GlcNAc...) asparagine" evidence="2">
    <location>
        <position position="89"/>
    </location>
</feature>
<feature type="disulfide bond" evidence="10 15">
    <location>
        <begin position="35"/>
        <end position="103"/>
    </location>
</feature>
<feature type="sequence variant" id="VAR_034014" description="In dbSNP:rs35415145.">
    <original>R</original>
    <variation>C</variation>
    <location>
        <position position="3"/>
    </location>
</feature>
<feature type="sequence variant" id="VAR_013071" description="In dbSNP:rs2069787." evidence="12">
    <original>R</original>
    <variation>H</variation>
    <location>
        <position position="15"/>
    </location>
</feature>
<feature type="sequence variant" id="VAR_013072" description="In dbSNP:rs40401." evidence="5 7 12">
    <original>P</original>
    <variation>S</variation>
    <location>
        <position position="27"/>
    </location>
</feature>
<feature type="sequence variant" id="VAR_034015" description="In dbSNP:rs35482671.">
    <original>N</original>
    <variation>S</variation>
    <location>
        <position position="60"/>
    </location>
</feature>
<feature type="helix" evidence="17">
    <location>
        <begin position="35"/>
        <end position="46"/>
    </location>
</feature>
<feature type="helix" evidence="17">
    <location>
        <begin position="56"/>
        <end position="58"/>
    </location>
</feature>
<feature type="helix" evidence="17">
    <location>
        <begin position="61"/>
        <end position="68"/>
    </location>
</feature>
<feature type="helix" evidence="17">
    <location>
        <begin position="70"/>
        <end position="72"/>
    </location>
</feature>
<feature type="helix" evidence="17">
    <location>
        <begin position="73"/>
        <end position="84"/>
    </location>
</feature>
<feature type="strand" evidence="17">
    <location>
        <begin position="87"/>
        <end position="89"/>
    </location>
</feature>
<feature type="helix" evidence="17">
    <location>
        <begin position="91"/>
        <end position="97"/>
    </location>
</feature>
<feature type="helix" evidence="17">
    <location>
        <begin position="101"/>
        <end position="103"/>
    </location>
</feature>
<feature type="helix" evidence="17">
    <location>
        <begin position="123"/>
        <end position="140"/>
    </location>
</feature>
<name>IL3_HUMAN</name>
<dbReference type="EMBL" id="M14743">
    <property type="protein sequence ID" value="AAA59146.1"/>
    <property type="molecule type" value="mRNA"/>
</dbReference>
<dbReference type="EMBL" id="M20137">
    <property type="protein sequence ID" value="AAA59147.1"/>
    <property type="molecule type" value="mRNA"/>
</dbReference>
<dbReference type="EMBL" id="M17115">
    <property type="protein sequence ID" value="AAA35725.1"/>
    <property type="molecule type" value="mRNA"/>
</dbReference>
<dbReference type="EMBL" id="AF365976">
    <property type="protein sequence ID" value="AAK38378.1"/>
    <property type="molecule type" value="Genomic_DNA"/>
</dbReference>
<dbReference type="EMBL" id="AC004511">
    <property type="protein sequence ID" value="AAC08706.1"/>
    <property type="molecule type" value="Genomic_DNA"/>
</dbReference>
<dbReference type="EMBL" id="BC066272">
    <property type="protein sequence ID" value="AAH66272.1"/>
    <property type="molecule type" value="mRNA"/>
</dbReference>
<dbReference type="EMBL" id="BC066273">
    <property type="protein sequence ID" value="AAH66273.1"/>
    <property type="molecule type" value="mRNA"/>
</dbReference>
<dbReference type="EMBL" id="BC066276">
    <property type="protein sequence ID" value="AAH66276.1"/>
    <property type="molecule type" value="mRNA"/>
</dbReference>
<dbReference type="EMBL" id="BC069472">
    <property type="protein sequence ID" value="AAH69472.1"/>
    <property type="molecule type" value="mRNA"/>
</dbReference>
<dbReference type="CCDS" id="CCDS4149.1"/>
<dbReference type="PIR" id="A24427">
    <property type="entry name" value="A24427"/>
</dbReference>
<dbReference type="RefSeq" id="NP_000579.2">
    <property type="nucleotide sequence ID" value="NM_000588.3"/>
</dbReference>
<dbReference type="PDB" id="1JLI">
    <property type="method" value="NMR"/>
    <property type="chains" value="A=34-144"/>
</dbReference>
<dbReference type="PDB" id="5UV8">
    <property type="method" value="X-ray"/>
    <property type="resolution" value="2.70 A"/>
    <property type="chains" value="B/I=31-152"/>
</dbReference>
<dbReference type="PDB" id="5UWC">
    <property type="method" value="X-ray"/>
    <property type="resolution" value="2.40 A"/>
    <property type="chains" value="I=31-152"/>
</dbReference>
<dbReference type="PDB" id="6NMY">
    <property type="method" value="X-ray"/>
    <property type="resolution" value="3.30 A"/>
    <property type="chains" value="I/J=31-144"/>
</dbReference>
<dbReference type="PDBsum" id="1JLI"/>
<dbReference type="PDBsum" id="5UV8"/>
<dbReference type="PDBsum" id="5UWC"/>
<dbReference type="PDBsum" id="6NMY"/>
<dbReference type="EMDB" id="EMD-41369"/>
<dbReference type="SMR" id="P08700"/>
<dbReference type="BioGRID" id="109777">
    <property type="interactions" value="6"/>
</dbReference>
<dbReference type="ComplexPortal" id="CPX-9224">
    <property type="entry name" value="Interleukin-3 receptor-ligand complex"/>
</dbReference>
<dbReference type="CORUM" id="P08700"/>
<dbReference type="DIP" id="DIP-6N"/>
<dbReference type="FunCoup" id="P08700">
    <property type="interactions" value="847"/>
</dbReference>
<dbReference type="IntAct" id="P08700">
    <property type="interactions" value="2"/>
</dbReference>
<dbReference type="STRING" id="9606.ENSP00000296870"/>
<dbReference type="BindingDB" id="P08700"/>
<dbReference type="DrugBank" id="DB01025">
    <property type="generic name" value="Amlexanox"/>
</dbReference>
<dbReference type="DrugBank" id="DB09221">
    <property type="generic name" value="Polaprezinc"/>
</dbReference>
<dbReference type="DrugBank" id="DB01593">
    <property type="generic name" value="Zinc"/>
</dbReference>
<dbReference type="DrugBank" id="DB14487">
    <property type="generic name" value="Zinc acetate"/>
</dbReference>
<dbReference type="DrugBank" id="DB14533">
    <property type="generic name" value="Zinc chloride"/>
</dbReference>
<dbReference type="DrugBank" id="DB14548">
    <property type="generic name" value="Zinc sulfate, unspecified form"/>
</dbReference>
<dbReference type="GlyCosmos" id="P08700">
    <property type="glycosylation" value="2 sites, No reported glycans"/>
</dbReference>
<dbReference type="GlyGen" id="P08700">
    <property type="glycosylation" value="3 sites"/>
</dbReference>
<dbReference type="BioMuta" id="IL3"/>
<dbReference type="DMDM" id="124330"/>
<dbReference type="PaxDb" id="9606-ENSP00000296870"/>
<dbReference type="PeptideAtlas" id="P08700"/>
<dbReference type="ProteomicsDB" id="52158"/>
<dbReference type="TopDownProteomics" id="P08700"/>
<dbReference type="Antibodypedia" id="14353">
    <property type="antibodies" value="877 antibodies from 42 providers"/>
</dbReference>
<dbReference type="DNASU" id="3562"/>
<dbReference type="Ensembl" id="ENST00000296870.3">
    <property type="protein sequence ID" value="ENSP00000296870.2"/>
    <property type="gene ID" value="ENSG00000164399.5"/>
</dbReference>
<dbReference type="GeneID" id="3562"/>
<dbReference type="KEGG" id="hsa:3562"/>
<dbReference type="MANE-Select" id="ENST00000296870.3">
    <property type="protein sequence ID" value="ENSP00000296870.2"/>
    <property type="RefSeq nucleotide sequence ID" value="NM_000588.4"/>
    <property type="RefSeq protein sequence ID" value="NP_000579.2"/>
</dbReference>
<dbReference type="UCSC" id="uc003kwe.2">
    <property type="organism name" value="human"/>
</dbReference>
<dbReference type="AGR" id="HGNC:6011"/>
<dbReference type="CTD" id="3562"/>
<dbReference type="DisGeNET" id="3562"/>
<dbReference type="GeneCards" id="IL3"/>
<dbReference type="HGNC" id="HGNC:6011">
    <property type="gene designation" value="IL3"/>
</dbReference>
<dbReference type="HPA" id="ENSG00000164399">
    <property type="expression patterns" value="Not detected"/>
</dbReference>
<dbReference type="MalaCards" id="IL3"/>
<dbReference type="MIM" id="147740">
    <property type="type" value="gene"/>
</dbReference>
<dbReference type="neXtProt" id="NX_P08700"/>
<dbReference type="OpenTargets" id="ENSG00000164399"/>
<dbReference type="PharmGKB" id="PA29830"/>
<dbReference type="VEuPathDB" id="HostDB:ENSG00000164399"/>
<dbReference type="eggNOG" id="ENOG502TD4X">
    <property type="taxonomic scope" value="Eukaryota"/>
</dbReference>
<dbReference type="GeneTree" id="ENSGT00940000163393"/>
<dbReference type="HOGENOM" id="CLU_144877_0_0_1"/>
<dbReference type="InParanoid" id="P08700"/>
<dbReference type="OMA" id="IKDGDWN"/>
<dbReference type="OrthoDB" id="9808790at2759"/>
<dbReference type="PAN-GO" id="P08700">
    <property type="GO annotations" value="0 GO annotations based on evolutionary models"/>
</dbReference>
<dbReference type="PhylomeDB" id="P08700"/>
<dbReference type="TreeFam" id="TF338567"/>
<dbReference type="PathwayCommons" id="P08700"/>
<dbReference type="Reactome" id="R-HSA-512988">
    <property type="pathway name" value="Interleukin-3, Interleukin-5 and GM-CSF signaling"/>
</dbReference>
<dbReference type="Reactome" id="R-HSA-5673001">
    <property type="pathway name" value="RAF/MAP kinase cascade"/>
</dbReference>
<dbReference type="Reactome" id="R-HSA-8939247">
    <property type="pathway name" value="RUNX1 regulates transcription of genes involved in interleukin signaling"/>
</dbReference>
<dbReference type="Reactome" id="R-HSA-912526">
    <property type="pathway name" value="Interleukin receptor SHC signaling"/>
</dbReference>
<dbReference type="SignaLink" id="P08700"/>
<dbReference type="SIGNOR" id="P08700"/>
<dbReference type="BioGRID-ORCS" id="3562">
    <property type="hits" value="36 hits in 1140 CRISPR screens"/>
</dbReference>
<dbReference type="EvolutionaryTrace" id="P08700"/>
<dbReference type="GeneWiki" id="Interleukin_3"/>
<dbReference type="GenomeRNAi" id="3562"/>
<dbReference type="Pharos" id="P08700">
    <property type="development level" value="Tbio"/>
</dbReference>
<dbReference type="PRO" id="PR:P08700"/>
<dbReference type="Proteomes" id="UP000005640">
    <property type="component" value="Chromosome 5"/>
</dbReference>
<dbReference type="RNAct" id="P08700">
    <property type="molecule type" value="protein"/>
</dbReference>
<dbReference type="Bgee" id="ENSG00000164399">
    <property type="expression patterns" value="Expressed in calcaneal tendon and 3 other cell types or tissues"/>
</dbReference>
<dbReference type="GO" id="GO:0005576">
    <property type="term" value="C:extracellular region"/>
    <property type="evidence" value="ECO:0000304"/>
    <property type="project" value="Reactome"/>
</dbReference>
<dbReference type="GO" id="GO:0005615">
    <property type="term" value="C:extracellular space"/>
    <property type="evidence" value="ECO:0000314"/>
    <property type="project" value="UniProt"/>
</dbReference>
<dbReference type="GO" id="GO:0005125">
    <property type="term" value="F:cytokine activity"/>
    <property type="evidence" value="ECO:0000314"/>
    <property type="project" value="BHF-UCL"/>
</dbReference>
<dbReference type="GO" id="GO:0008083">
    <property type="term" value="F:growth factor activity"/>
    <property type="evidence" value="ECO:0007669"/>
    <property type="project" value="UniProtKB-KW"/>
</dbReference>
<dbReference type="GO" id="GO:0005135">
    <property type="term" value="F:interleukin-3 receptor binding"/>
    <property type="evidence" value="ECO:0000304"/>
    <property type="project" value="UniProtKB"/>
</dbReference>
<dbReference type="GO" id="GO:0097696">
    <property type="term" value="P:cell surface receptor signaling pathway via STAT"/>
    <property type="evidence" value="ECO:0000314"/>
    <property type="project" value="BHF-UCL"/>
</dbReference>
<dbReference type="GO" id="GO:0007267">
    <property type="term" value="P:cell-cell signaling"/>
    <property type="evidence" value="ECO:0000304"/>
    <property type="project" value="ProtInc"/>
</dbReference>
<dbReference type="GO" id="GO:0035162">
    <property type="term" value="P:embryonic hemopoiesis"/>
    <property type="evidence" value="ECO:0000314"/>
    <property type="project" value="DFLAT"/>
</dbReference>
<dbReference type="GO" id="GO:0006955">
    <property type="term" value="P:immune response"/>
    <property type="evidence" value="ECO:0007669"/>
    <property type="project" value="InterPro"/>
</dbReference>
<dbReference type="GO" id="GO:0038156">
    <property type="term" value="P:interleukin-3-mediated signaling pathway"/>
    <property type="evidence" value="ECO:0000314"/>
    <property type="project" value="BHF-UCL"/>
</dbReference>
<dbReference type="GO" id="GO:0007399">
    <property type="term" value="P:nervous system development"/>
    <property type="evidence" value="ECO:0000304"/>
    <property type="project" value="ProtInc"/>
</dbReference>
<dbReference type="GO" id="GO:0008284">
    <property type="term" value="P:positive regulation of cell population proliferation"/>
    <property type="evidence" value="ECO:0000314"/>
    <property type="project" value="BHF-UCL"/>
</dbReference>
<dbReference type="Gene3D" id="1.20.1250.10">
    <property type="match status" value="1"/>
</dbReference>
<dbReference type="InterPro" id="IPR009079">
    <property type="entry name" value="4_helix_cytokine-like_core"/>
</dbReference>
<dbReference type="InterPro" id="IPR002183">
    <property type="entry name" value="IL-3"/>
</dbReference>
<dbReference type="PANTHER" id="PTHR48489">
    <property type="entry name" value="INTERLEUKIN-3"/>
    <property type="match status" value="1"/>
</dbReference>
<dbReference type="PANTHER" id="PTHR48489:SF1">
    <property type="entry name" value="INTERLEUKIN-3"/>
    <property type="match status" value="1"/>
</dbReference>
<dbReference type="Pfam" id="PF02059">
    <property type="entry name" value="IL3"/>
    <property type="match status" value="1"/>
</dbReference>
<dbReference type="PIRSF" id="PIRSF001939">
    <property type="entry name" value="IL-3"/>
    <property type="match status" value="1"/>
</dbReference>
<dbReference type="PRINTS" id="PR00430">
    <property type="entry name" value="INTERLEUKIN3"/>
</dbReference>
<dbReference type="SUPFAM" id="SSF47266">
    <property type="entry name" value="4-helical cytokines"/>
    <property type="match status" value="1"/>
</dbReference>
<sequence>MSRLPVLLLLQLLVRPGLQAPMTQTTPLKTSWVNCSNMIDEIITHLKQPPLPLLDFNNLNGEDQDILMENNLRRPNLEAFNRAVKSLQNASAIESILKNLLPCLPLATAAPTRHPIHIKDGDWNEFRRKLTFYLKTLENAQAQQTTLSLAIF</sequence>